<accession>Q6DD88</accession>
<accession>Q8N7W5</accession>
<accession>Q9H8Q5</accession>
<accession>Q9UFL1</accession>
<name>ATLA3_HUMAN</name>
<gene>
    <name evidence="20" type="primary">ATL3</name>
</gene>
<comment type="function">
    <text evidence="1 4 5 7 9 13">Atlastin-3 (ATL3) is a membrane-anchored GTPase that mediates the GTP-dependent fusion of endoplasmic reticulum (ER) membranes, maintaining the continuous ER network. It facilitates the formation of three-way junctions where ER tubules intersect (PubMed:18270207, PubMed:19665976, PubMed:24459106, PubMed:27619977, PubMed:37102997). Two atlastin-3 on neighboring ER tubules bind GTP and form loose homodimers through the GB1/RHD3-type G domains and 3HB regions. Upon GTP hydrolysis, the 3HB regions tighten, pulling the membranes together to drive their fusion. After fusion, the homodimer disassembles upon release of inorganic phosphate (Pi). Subsequently, GDP dissociates, resetting the monomers to a conformation ready for a new fusion cycle (By similarity).</text>
</comment>
<comment type="catalytic activity">
    <reaction evidence="10 12 13">
        <text>GTP + H2O = GDP + phosphate + H(+)</text>
        <dbReference type="Rhea" id="RHEA:19669"/>
        <dbReference type="ChEBI" id="CHEBI:15377"/>
        <dbReference type="ChEBI" id="CHEBI:15378"/>
        <dbReference type="ChEBI" id="CHEBI:37565"/>
        <dbReference type="ChEBI" id="CHEBI:43474"/>
        <dbReference type="ChEBI" id="CHEBI:58189"/>
    </reaction>
    <physiologicalReaction direction="left-to-right" evidence="19">
        <dbReference type="Rhea" id="RHEA:19670"/>
    </physiologicalReaction>
</comment>
<comment type="subunit">
    <text evidence="4 6 11 12">Monomeric and homodimeric. The homodimer, transiently formed by two molecules on opposing membranes, is the active form mediating ER membrane fusion (PubMed:18270207, PubMed:34546351). Interacts with ZFYVE27; both proteins are involved in endoplasmic reticulum tubular network organization (PubMed:23969831). Interacts with REEP5; both proteins are involved in endoplasmic reticulum tubular network organization (PubMed:32075961).</text>
</comment>
<comment type="interaction">
    <interactant intactId="EBI-6165882">
        <id>Q6DD88</id>
    </interactant>
    <interactant intactId="EBI-3892947">
        <id>Q5T4F4</id>
        <label>ZFYVE27</label>
    </interactant>
    <organismsDiffer>false</organismsDiffer>
    <experiments>3</experiments>
</comment>
<comment type="subcellular location">
    <subcellularLocation>
        <location evidence="4 5 6 7 8 9 13">Endoplasmic reticulum membrane</location>
        <topology evidence="4">Multi-pass membrane protein</topology>
    </subcellularLocation>
    <text evidence="6 7 9">Localizes to endoplasmic reticulum tubules and accumulates in punctuate structures corresponding to 3-way junctions, which represent crossing-points at which the tubules build a polygonal network.</text>
</comment>
<comment type="tissue specificity">
    <text evidence="4 7">Expressed in the central nervous system and in dorsal root ganglia neurons. Expressed in peripheral tissues (at protein level).</text>
</comment>
<comment type="domain">
    <text evidence="10">The GB1/RHD3-type G domain mediates GTP-binding and hydrolysis as well as homodimerization.</text>
</comment>
<comment type="domain">
    <text evidence="1">The two three-helix bundle (3HB) regions in the homodimer are loosely associated initially, but they tighten upon GTP hydrolysis, facilitating the fusion of membranes.</text>
</comment>
<comment type="disease" evidence="7 13">
    <disease id="DI-04037">
        <name>Neuropathy, hereditary sensory, 1F</name>
        <acronym>HSN1F</acronym>
        <description>An autosomal dominant sensory neuropathy affecting the lower limbs. Distal sensory impairment becomes apparent during the second or third decade of life, resulting in painless ulceration of the feet with poor healing, which can progress to osteomyelitis, bone destruction, and amputation. There is no autonomic involvement, spasticity, or cognitive impairment.</description>
        <dbReference type="MIM" id="615632"/>
    </disease>
    <text>The disease is caused by variants affecting the gene represented in this entry.</text>
</comment>
<comment type="similarity">
    <text evidence="3">Belongs to the TRAFAC class dynamin-like GTPase superfamily. GB1/RHD3 GTPase family. GB1 subfamily.</text>
</comment>
<comment type="sequence caution" evidence="17">
    <conflict type="miscellaneous discrepancy">
        <sequence resource="EMBL-CDS" id="BAC05111"/>
    </conflict>
    <text>Aberrant splicing.</text>
</comment>
<evidence type="ECO:0000250" key="1">
    <source>
        <dbReference type="UniProtKB" id="Q8WXF7"/>
    </source>
</evidence>
<evidence type="ECO:0000255" key="2"/>
<evidence type="ECO:0000255" key="3">
    <source>
        <dbReference type="PROSITE-ProRule" id="PRU01052"/>
    </source>
</evidence>
<evidence type="ECO:0000269" key="4">
    <source>
    </source>
</evidence>
<evidence type="ECO:0000269" key="5">
    <source>
    </source>
</evidence>
<evidence type="ECO:0000269" key="6">
    <source>
    </source>
</evidence>
<evidence type="ECO:0000269" key="7">
    <source>
    </source>
</evidence>
<evidence type="ECO:0000269" key="8">
    <source>
    </source>
</evidence>
<evidence type="ECO:0000269" key="9">
    <source>
    </source>
</evidence>
<evidence type="ECO:0000269" key="10">
    <source>
    </source>
</evidence>
<evidence type="ECO:0000269" key="11">
    <source>
    </source>
</evidence>
<evidence type="ECO:0000269" key="12">
    <source>
    </source>
</evidence>
<evidence type="ECO:0000269" key="13">
    <source>
    </source>
</evidence>
<evidence type="ECO:0000303" key="14">
    <source>
    </source>
</evidence>
<evidence type="ECO:0000303" key="15">
    <source>
    </source>
</evidence>
<evidence type="ECO:0000303" key="16">
    <source>
    </source>
</evidence>
<evidence type="ECO:0000305" key="17"/>
<evidence type="ECO:0000305" key="18">
    <source>
    </source>
</evidence>
<evidence type="ECO:0000305" key="19">
    <source>
    </source>
</evidence>
<evidence type="ECO:0000312" key="20">
    <source>
        <dbReference type="HGNC" id="HGNC:24526"/>
    </source>
</evidence>
<evidence type="ECO:0007744" key="21">
    <source>
        <dbReference type="PDB" id="5VGR"/>
    </source>
</evidence>
<evidence type="ECO:0007744" key="22">
    <source>
        <dbReference type="PDB" id="6XJO"/>
    </source>
</evidence>
<evidence type="ECO:0007744" key="23">
    <source>
    </source>
</evidence>
<evidence type="ECO:0007744" key="24">
    <source>
    </source>
</evidence>
<evidence type="ECO:0007744" key="25">
    <source>
    </source>
</evidence>
<evidence type="ECO:0007829" key="26">
    <source>
        <dbReference type="PDB" id="5VGR"/>
    </source>
</evidence>
<evidence type="ECO:0007829" key="27">
    <source>
        <dbReference type="PDB" id="6XJO"/>
    </source>
</evidence>
<reference key="1">
    <citation type="journal article" date="2004" name="Nat. Genet.">
        <title>Complete sequencing and characterization of 21,243 full-length human cDNAs.</title>
        <authorList>
            <person name="Ota T."/>
            <person name="Suzuki Y."/>
            <person name="Nishikawa T."/>
            <person name="Otsuki T."/>
            <person name="Sugiyama T."/>
            <person name="Irie R."/>
            <person name="Wakamatsu A."/>
            <person name="Hayashi K."/>
            <person name="Sato H."/>
            <person name="Nagai K."/>
            <person name="Kimura K."/>
            <person name="Makita H."/>
            <person name="Sekine M."/>
            <person name="Obayashi M."/>
            <person name="Nishi T."/>
            <person name="Shibahara T."/>
            <person name="Tanaka T."/>
            <person name="Ishii S."/>
            <person name="Yamamoto J."/>
            <person name="Saito K."/>
            <person name="Kawai Y."/>
            <person name="Isono Y."/>
            <person name="Nakamura Y."/>
            <person name="Nagahari K."/>
            <person name="Murakami K."/>
            <person name="Yasuda T."/>
            <person name="Iwayanagi T."/>
            <person name="Wagatsuma M."/>
            <person name="Shiratori A."/>
            <person name="Sudo H."/>
            <person name="Hosoiri T."/>
            <person name="Kaku Y."/>
            <person name="Kodaira H."/>
            <person name="Kondo H."/>
            <person name="Sugawara M."/>
            <person name="Takahashi M."/>
            <person name="Kanda K."/>
            <person name="Yokoi T."/>
            <person name="Furuya T."/>
            <person name="Kikkawa E."/>
            <person name="Omura Y."/>
            <person name="Abe K."/>
            <person name="Kamihara K."/>
            <person name="Katsuta N."/>
            <person name="Sato K."/>
            <person name="Tanikawa M."/>
            <person name="Yamazaki M."/>
            <person name="Ninomiya K."/>
            <person name="Ishibashi T."/>
            <person name="Yamashita H."/>
            <person name="Murakawa K."/>
            <person name="Fujimori K."/>
            <person name="Tanai H."/>
            <person name="Kimata M."/>
            <person name="Watanabe M."/>
            <person name="Hiraoka S."/>
            <person name="Chiba Y."/>
            <person name="Ishida S."/>
            <person name="Ono Y."/>
            <person name="Takiguchi S."/>
            <person name="Watanabe S."/>
            <person name="Yosida M."/>
            <person name="Hotuta T."/>
            <person name="Kusano J."/>
            <person name="Kanehori K."/>
            <person name="Takahashi-Fujii A."/>
            <person name="Hara H."/>
            <person name="Tanase T.-O."/>
            <person name="Nomura Y."/>
            <person name="Togiya S."/>
            <person name="Komai F."/>
            <person name="Hara R."/>
            <person name="Takeuchi K."/>
            <person name="Arita M."/>
            <person name="Imose N."/>
            <person name="Musashino K."/>
            <person name="Yuuki H."/>
            <person name="Oshima A."/>
            <person name="Sasaki N."/>
            <person name="Aotsuka S."/>
            <person name="Yoshikawa Y."/>
            <person name="Matsunawa H."/>
            <person name="Ichihara T."/>
            <person name="Shiohata N."/>
            <person name="Sano S."/>
            <person name="Moriya S."/>
            <person name="Momiyama H."/>
            <person name="Satoh N."/>
            <person name="Takami S."/>
            <person name="Terashima Y."/>
            <person name="Suzuki O."/>
            <person name="Nakagawa S."/>
            <person name="Senoh A."/>
            <person name="Mizoguchi H."/>
            <person name="Goto Y."/>
            <person name="Shimizu F."/>
            <person name="Wakebe H."/>
            <person name="Hishigaki H."/>
            <person name="Watanabe T."/>
            <person name="Sugiyama A."/>
            <person name="Takemoto M."/>
            <person name="Kawakami B."/>
            <person name="Yamazaki M."/>
            <person name="Watanabe K."/>
            <person name="Kumagai A."/>
            <person name="Itakura S."/>
            <person name="Fukuzumi Y."/>
            <person name="Fujimori Y."/>
            <person name="Komiyama M."/>
            <person name="Tashiro H."/>
            <person name="Tanigami A."/>
            <person name="Fujiwara T."/>
            <person name="Ono T."/>
            <person name="Yamada K."/>
            <person name="Fujii Y."/>
            <person name="Ozaki K."/>
            <person name="Hirao M."/>
            <person name="Ohmori Y."/>
            <person name="Kawabata A."/>
            <person name="Hikiji T."/>
            <person name="Kobatake N."/>
            <person name="Inagaki H."/>
            <person name="Ikema Y."/>
            <person name="Okamoto S."/>
            <person name="Okitani R."/>
            <person name="Kawakami T."/>
            <person name="Noguchi S."/>
            <person name="Itoh T."/>
            <person name="Shigeta K."/>
            <person name="Senba T."/>
            <person name="Matsumura K."/>
            <person name="Nakajima Y."/>
            <person name="Mizuno T."/>
            <person name="Morinaga M."/>
            <person name="Sasaki M."/>
            <person name="Togashi T."/>
            <person name="Oyama M."/>
            <person name="Hata H."/>
            <person name="Watanabe M."/>
            <person name="Komatsu T."/>
            <person name="Mizushima-Sugano J."/>
            <person name="Satoh T."/>
            <person name="Shirai Y."/>
            <person name="Takahashi Y."/>
            <person name="Nakagawa K."/>
            <person name="Okumura K."/>
            <person name="Nagase T."/>
            <person name="Nomura N."/>
            <person name="Kikuchi H."/>
            <person name="Masuho Y."/>
            <person name="Yamashita R."/>
            <person name="Nakai K."/>
            <person name="Yada T."/>
            <person name="Nakamura Y."/>
            <person name="Ohara O."/>
            <person name="Isogai T."/>
            <person name="Sugano S."/>
        </authorList>
    </citation>
    <scope>NUCLEOTIDE SEQUENCE [LARGE SCALE MRNA]</scope>
    <source>
        <tissue>Ovary</tissue>
        <tissue>Testis</tissue>
    </source>
</reference>
<reference key="2">
    <citation type="journal article" date="2007" name="BMC Genomics">
        <title>The full-ORF clone resource of the German cDNA consortium.</title>
        <authorList>
            <person name="Bechtel S."/>
            <person name="Rosenfelder H."/>
            <person name="Duda A."/>
            <person name="Schmidt C.P."/>
            <person name="Ernst U."/>
            <person name="Wellenreuther R."/>
            <person name="Mehrle A."/>
            <person name="Schuster C."/>
            <person name="Bahr A."/>
            <person name="Bloecker H."/>
            <person name="Heubner D."/>
            <person name="Hoerlein A."/>
            <person name="Michel G."/>
            <person name="Wedler H."/>
            <person name="Koehrer K."/>
            <person name="Ottenwaelder B."/>
            <person name="Poustka A."/>
            <person name="Wiemann S."/>
            <person name="Schupp I."/>
        </authorList>
    </citation>
    <scope>NUCLEOTIDE SEQUENCE [LARGE SCALE MRNA]</scope>
    <source>
        <tissue>Brain</tissue>
    </source>
</reference>
<reference key="3">
    <citation type="journal article" date="2004" name="Genome Res.">
        <title>The status, quality, and expansion of the NIH full-length cDNA project: the Mammalian Gene Collection (MGC).</title>
        <authorList>
            <consortium name="The MGC Project Team"/>
        </authorList>
    </citation>
    <scope>NUCLEOTIDE SEQUENCE [LARGE SCALE MRNA]</scope>
    <source>
        <tissue>Pancreas</tissue>
    </source>
</reference>
<reference key="4">
    <citation type="journal article" date="2003" name="J. Biol. Chem.">
        <title>Cellular localization, oligomerization, and membrane association of the hereditary spastic paraplegia 3A (SPG3A) protein atlastin.</title>
        <authorList>
            <person name="Zhu P.-P."/>
            <person name="Patterson A."/>
            <person name="Lavoie B."/>
            <person name="Stadler J."/>
            <person name="Shoeb M."/>
            <person name="Patel R."/>
            <person name="Blackstone C."/>
        </authorList>
    </citation>
    <scope>IDENTIFICATION</scope>
</reference>
<reference key="5">
    <citation type="journal article" date="2006" name="Cell">
        <title>Global, in vivo, and site-specific phosphorylation dynamics in signaling networks.</title>
        <authorList>
            <person name="Olsen J.V."/>
            <person name="Blagoev B."/>
            <person name="Gnad F."/>
            <person name="Macek B."/>
            <person name="Kumar C."/>
            <person name="Mortensen P."/>
            <person name="Mann M."/>
        </authorList>
    </citation>
    <scope>PHOSPHORYLATION [LARGE SCALE ANALYSIS] AT SER-535</scope>
    <scope>IDENTIFICATION BY MASS SPECTROMETRY [LARGE SCALE ANALYSIS]</scope>
    <source>
        <tissue>Cervix carcinoma</tissue>
    </source>
</reference>
<reference key="6">
    <citation type="journal article" date="2008" name="Hum. Mol. Genet.">
        <title>Atlastin GTPases are required for Golgi apparatus and ER morphogenesis.</title>
        <authorList>
            <person name="Rismanchi N."/>
            <person name="Soderblom C."/>
            <person name="Stadler J."/>
            <person name="Zhu P.-P."/>
            <person name="Blackstone C."/>
        </authorList>
    </citation>
    <scope>FUNCTION</scope>
    <scope>TOPOLOGY</scope>
    <scope>SUBUNIT</scope>
    <scope>SUBCELLULAR LOCATION</scope>
    <scope>MUTAGENESIS OF LYS-73 AND ARG-213</scope>
    <scope>TISSUE SPECIFICITY</scope>
</reference>
<reference key="7">
    <citation type="journal article" date="2009" name="Cell">
        <title>A class of dynamin-like GTPases involved in the generation of the tubular ER network.</title>
        <authorList>
            <person name="Hu J."/>
            <person name="Shibata Y."/>
            <person name="Zhu P.-P."/>
            <person name="Voss C."/>
            <person name="Rismanchi N."/>
            <person name="Prinz W.A."/>
            <person name="Rapoport T.A."/>
            <person name="Blackstone C."/>
        </authorList>
    </citation>
    <scope>FUNCTION</scope>
    <scope>SUBCELLULAR LOCATION</scope>
</reference>
<reference key="8">
    <citation type="journal article" date="2009" name="Science">
        <title>Lysine acetylation targets protein complexes and co-regulates major cellular functions.</title>
        <authorList>
            <person name="Choudhary C."/>
            <person name="Kumar C."/>
            <person name="Gnad F."/>
            <person name="Nielsen M.L."/>
            <person name="Rehman M."/>
            <person name="Walther T.C."/>
            <person name="Olsen J.V."/>
            <person name="Mann M."/>
        </authorList>
    </citation>
    <scope>ACETYLATION [LARGE SCALE ANALYSIS] AT LYS-391</scope>
    <scope>IDENTIFICATION BY MASS SPECTROMETRY [LARGE SCALE ANALYSIS]</scope>
</reference>
<reference key="9">
    <citation type="journal article" date="2011" name="BMC Syst. Biol.">
        <title>Initial characterization of the human central proteome.</title>
        <authorList>
            <person name="Burkard T.R."/>
            <person name="Planyavsky M."/>
            <person name="Kaupe I."/>
            <person name="Breitwieser F.P."/>
            <person name="Buerckstuemmer T."/>
            <person name="Bennett K.L."/>
            <person name="Superti-Furga G."/>
            <person name="Colinge J."/>
        </authorList>
    </citation>
    <scope>IDENTIFICATION BY MASS SPECTROMETRY [LARGE SCALE ANALYSIS]</scope>
</reference>
<reference key="10">
    <citation type="journal article" date="2013" name="J. Proteome Res.">
        <title>Toward a comprehensive characterization of a human cancer cell phosphoproteome.</title>
        <authorList>
            <person name="Zhou H."/>
            <person name="Di Palma S."/>
            <person name="Preisinger C."/>
            <person name="Peng M."/>
            <person name="Polat A.N."/>
            <person name="Heck A.J."/>
            <person name="Mohammed S."/>
        </authorList>
    </citation>
    <scope>PHOSPHORYLATION [LARGE SCALE ANALYSIS] AT SER-535</scope>
    <scope>IDENTIFICATION BY MASS SPECTROMETRY [LARGE SCALE ANALYSIS]</scope>
    <source>
        <tissue>Cervix carcinoma</tissue>
    </source>
</reference>
<reference key="11">
    <citation type="journal article" date="2013" name="Proc. Natl. Acad. Sci. U.S.A.">
        <title>Protrudin binds atlastins and endoplasmic reticulum-shaping proteins and regulates network formation.</title>
        <authorList>
            <person name="Chang J."/>
            <person name="Lee S."/>
            <person name="Blackstone C."/>
        </authorList>
    </citation>
    <scope>INTERACTION WITH ZFYVE27</scope>
    <scope>SUBCELLULAR LOCATION</scope>
</reference>
<reference key="12">
    <citation type="journal article" date="2014" name="Brain">
        <title>Sensory neuropathy with bone destruction due to a mutation in the membrane-shaping atlastin GTPase 3.</title>
        <authorList>
            <person name="Kornak U."/>
            <person name="Mademan I."/>
            <person name="Schinke M."/>
            <person name="Voigt M."/>
            <person name="Krawitz P."/>
            <person name="Hecht J."/>
            <person name="Barvencik F."/>
            <person name="Schinke T."/>
            <person name="Giesselmann S."/>
            <person name="Beil F.T."/>
            <person name="Pou-Serradell A."/>
            <person name="Vilchez J.J."/>
            <person name="Beetz C."/>
            <person name="Deconinck T."/>
            <person name="Timmerman V."/>
            <person name="Kaether C."/>
            <person name="De Jonghe P."/>
            <person name="Huebner C.A."/>
            <person name="Gal A."/>
            <person name="Amling M."/>
            <person name="Mundlos S."/>
            <person name="Baets J."/>
            <person name="Kurth I."/>
        </authorList>
    </citation>
    <scope>FUNCTION</scope>
    <scope>SUBCELLULAR LOCATION</scope>
    <scope>TISSUE SPECIFICITY</scope>
    <scope>VARIANT HSN1F CYS-192</scope>
    <scope>CHARACTERIZATION OF VARIANT HSN1F CYS-192</scope>
</reference>
<reference key="13">
    <citation type="journal article" date="2014" name="J. Proteomics">
        <title>An enzyme assisted RP-RPLC approach for in-depth analysis of human liver phosphoproteome.</title>
        <authorList>
            <person name="Bian Y."/>
            <person name="Song C."/>
            <person name="Cheng K."/>
            <person name="Dong M."/>
            <person name="Wang F."/>
            <person name="Huang J."/>
            <person name="Sun D."/>
            <person name="Wang L."/>
            <person name="Ye M."/>
            <person name="Zou H."/>
        </authorList>
    </citation>
    <scope>IDENTIFICATION BY MASS SPECTROMETRY [LARGE SCALE ANALYSIS]</scope>
    <source>
        <tissue>Liver</tissue>
    </source>
</reference>
<reference key="14">
    <citation type="journal article" date="2015" name="Proc. Natl. Acad. Sci. U.S.A.">
        <title>Lunapark stabilizes nascent three-way junctions in the endoplasmic reticulum.</title>
        <authorList>
            <person name="Chen S."/>
            <person name="Desai T."/>
            <person name="McNew J.A."/>
            <person name="Gerard P."/>
            <person name="Novick P.J."/>
            <person name="Ferro-Novick S."/>
        </authorList>
    </citation>
    <scope>SUBCELLULAR LOCATION</scope>
</reference>
<reference key="15">
    <citation type="journal article" date="2015" name="Proteomics">
        <title>N-terminome analysis of the human mitochondrial proteome.</title>
        <authorList>
            <person name="Vaca Jacome A.S."/>
            <person name="Rabilloud T."/>
            <person name="Schaeffer-Reiss C."/>
            <person name="Rompais M."/>
            <person name="Ayoub D."/>
            <person name="Lane L."/>
            <person name="Bairoch A."/>
            <person name="Van Dorsselaer A."/>
            <person name="Carapito C."/>
        </authorList>
    </citation>
    <scope>IDENTIFICATION BY MASS SPECTROMETRY [LARGE SCALE ANALYSIS]</scope>
</reference>
<reference key="16">
    <citation type="journal article" date="2016" name="Elife">
        <title>Cooperation of the ER-shaping proteins atlastin, lunapark, and reticulons to generate a tubular membrane network.</title>
        <authorList>
            <person name="Wang S."/>
            <person name="Tukachinsky H."/>
            <person name="Romano F.B."/>
            <person name="Rapoport T.A."/>
        </authorList>
    </citation>
    <scope>FUNCTION</scope>
    <scope>SUBCELLULAR LOCATION</scope>
    <scope>MUTAGENESIS OF LYS-73 AND ARG-213</scope>
</reference>
<reference key="17">
    <citation type="journal article" date="2020" name="Nat. Commun.">
        <title>REEP5 depletion causes sarco-endoplasmic reticulum vacuolization and cardiac functional defects.</title>
        <authorList>
            <person name="Lee S.H."/>
            <person name="Hadipour-Lakmehsari S."/>
            <person name="Murthy H.R."/>
            <person name="Gibb N."/>
            <person name="Miyake T."/>
            <person name="Teng A.C.T."/>
            <person name="Cosme J."/>
            <person name="Yu J.C."/>
            <person name="Moon M."/>
            <person name="Lim S."/>
            <person name="Wong V."/>
            <person name="Liu P."/>
            <person name="Billia F."/>
            <person name="Fernandez-Gonzalez R."/>
            <person name="Stagljar I."/>
            <person name="Sharma P."/>
            <person name="Kislinger T."/>
            <person name="Scott I.C."/>
            <person name="Gramolini A.O."/>
        </authorList>
    </citation>
    <scope>INTERACTION WITH REEP5</scope>
</reference>
<reference key="18">
    <citation type="journal article" date="2023" name="J. Cell Biol.">
        <title>Human atlastin-3 is a constitutive ER membrane fusion catalyst.</title>
        <authorList>
            <person name="Bryce S."/>
            <person name="Stolzer M."/>
            <person name="Crosby D."/>
            <person name="Yang R."/>
            <person name="Durand D."/>
            <person name="Lee T.H."/>
        </authorList>
    </citation>
    <scope>FUNCTION</scope>
    <scope>CATALYTIC ACTIVITY</scope>
    <scope>SUBCELLULAR LOCATION</scope>
    <scope>MUTAGENESIS OF ARG-70; PRO-338 AND ILE-503</scope>
    <scope>CHARACTERIZATION OF VARIANT HSN1F CYS-192</scope>
</reference>
<reference evidence="21" key="19">
    <citation type="journal article" date="2017" name="Structure">
        <title>Timing and Reset Mechanism of GTP Hydrolysis-Driven Conformational Changes of Atlastin.</title>
        <authorList>
            <person name="O'Donnell J.P."/>
            <person name="Cooley R.B."/>
            <person name="Kelly C.M."/>
            <person name="Miller K."/>
            <person name="Andersen O.S."/>
            <person name="Rusinova R."/>
            <person name="Sondermann H."/>
        </authorList>
    </citation>
    <scope>X-RAY CRYSTALLOGRAPHY (2.10 ANGSTROMS) OF 21-442 IN COMPLEX WITH GDP</scope>
    <scope>CATALYTIC ACTIVITY</scope>
    <scope>DOMAIN</scope>
    <scope>MUTAGENESIS OF ARG-109</scope>
</reference>
<reference evidence="22" key="20">
    <citation type="journal article" date="2021" name="J. Cell Biol.">
        <title>The hypervariable region of atlastin-1 is a site for intrinsic and extrinsic regulation.</title>
        <authorList>
            <person name="Kelly C.M."/>
            <person name="Byrnes L.J."/>
            <person name="Neela N."/>
            <person name="Sondermann H."/>
            <person name="O'Donnell J.P."/>
        </authorList>
    </citation>
    <scope>X-RAY CRYSTALLOGRAPHY (2.10 ANGSTROMS) OF 1-334 IN COMPLEX WITH GDP AND MG(2+)</scope>
    <scope>CATALYTIC ACTIVITY</scope>
    <scope>SUBUNIT</scope>
    <scope>REGION</scope>
</reference>
<protein>
    <recommendedName>
        <fullName evidence="14">Atlastin-3</fullName>
        <shortName evidence="15">AT3</shortName>
        <shortName evidence="16">ATL-3</shortName>
        <ecNumber evidence="13">3.6.5.-</ecNumber>
    </recommendedName>
</protein>
<organism>
    <name type="scientific">Homo sapiens</name>
    <name type="common">Human</name>
    <dbReference type="NCBI Taxonomy" id="9606"/>
    <lineage>
        <taxon>Eukaryota</taxon>
        <taxon>Metazoa</taxon>
        <taxon>Chordata</taxon>
        <taxon>Craniata</taxon>
        <taxon>Vertebrata</taxon>
        <taxon>Euteleostomi</taxon>
        <taxon>Mammalia</taxon>
        <taxon>Eutheria</taxon>
        <taxon>Euarchontoglires</taxon>
        <taxon>Primates</taxon>
        <taxon>Haplorrhini</taxon>
        <taxon>Catarrhini</taxon>
        <taxon>Hominidae</taxon>
        <taxon>Homo</taxon>
    </lineage>
</organism>
<dbReference type="EC" id="3.6.5.-" evidence="13"/>
<dbReference type="EMBL" id="AK097588">
    <property type="protein sequence ID" value="BAC05111.1"/>
    <property type="status" value="ALT_SEQ"/>
    <property type="molecule type" value="mRNA"/>
</dbReference>
<dbReference type="EMBL" id="AK023383">
    <property type="protein sequence ID" value="BAB14552.1"/>
    <property type="molecule type" value="mRNA"/>
</dbReference>
<dbReference type="EMBL" id="AL117600">
    <property type="protein sequence ID" value="CAB56010.2"/>
    <property type="molecule type" value="mRNA"/>
</dbReference>
<dbReference type="EMBL" id="BC077727">
    <property type="protein sequence ID" value="AAH77727.1"/>
    <property type="molecule type" value="mRNA"/>
</dbReference>
<dbReference type="CCDS" id="CCDS41663.1"/>
<dbReference type="PIR" id="T17320">
    <property type="entry name" value="T17320"/>
</dbReference>
<dbReference type="RefSeq" id="NP_001276977.1">
    <property type="nucleotide sequence ID" value="NM_001290048.1"/>
</dbReference>
<dbReference type="RefSeq" id="NP_056274.3">
    <property type="nucleotide sequence ID" value="NM_015459.4"/>
</dbReference>
<dbReference type="PDB" id="5VGR">
    <property type="method" value="X-ray"/>
    <property type="resolution" value="2.10 A"/>
    <property type="chains" value="A/B=21-442"/>
</dbReference>
<dbReference type="PDB" id="6XJO">
    <property type="method" value="X-ray"/>
    <property type="resolution" value="2.10 A"/>
    <property type="chains" value="A/B=1-334"/>
</dbReference>
<dbReference type="PDBsum" id="5VGR"/>
<dbReference type="PDBsum" id="6XJO"/>
<dbReference type="SMR" id="Q6DD88"/>
<dbReference type="BioGRID" id="117423">
    <property type="interactions" value="229"/>
</dbReference>
<dbReference type="CORUM" id="Q6DD88"/>
<dbReference type="FunCoup" id="Q6DD88">
    <property type="interactions" value="1859"/>
</dbReference>
<dbReference type="IntAct" id="Q6DD88">
    <property type="interactions" value="130"/>
</dbReference>
<dbReference type="MINT" id="Q6DD88"/>
<dbReference type="STRING" id="9606.ENSP00000381844"/>
<dbReference type="TCDB" id="1.N.5.1.7">
    <property type="family name" value="the endoplasmic reticulum fusion gtpase, atlastin (atlastin) family"/>
</dbReference>
<dbReference type="GlyGen" id="Q6DD88">
    <property type="glycosylation" value="2 sites, 1 N-linked glycan (1 site), 1 O-linked glycan (1 site)"/>
</dbReference>
<dbReference type="iPTMnet" id="Q6DD88"/>
<dbReference type="MetOSite" id="Q6DD88"/>
<dbReference type="PhosphoSitePlus" id="Q6DD88"/>
<dbReference type="SwissPalm" id="Q6DD88"/>
<dbReference type="BioMuta" id="ATL3"/>
<dbReference type="DMDM" id="74736374"/>
<dbReference type="jPOST" id="Q6DD88"/>
<dbReference type="MassIVE" id="Q6DD88"/>
<dbReference type="PaxDb" id="9606-ENSP00000381844"/>
<dbReference type="PeptideAtlas" id="Q6DD88"/>
<dbReference type="PRIDE" id="Q6DD88"/>
<dbReference type="ProteomicsDB" id="66223"/>
<dbReference type="Pumba" id="Q6DD88"/>
<dbReference type="TopDownProteomics" id="Q6DD88"/>
<dbReference type="Antibodypedia" id="28987">
    <property type="antibodies" value="232 antibodies from 27 providers"/>
</dbReference>
<dbReference type="DNASU" id="25923"/>
<dbReference type="Ensembl" id="ENST00000398868.8">
    <property type="protein sequence ID" value="ENSP00000381844.3"/>
    <property type="gene ID" value="ENSG00000184743.13"/>
</dbReference>
<dbReference type="GeneID" id="25923"/>
<dbReference type="KEGG" id="hsa:25923"/>
<dbReference type="MANE-Select" id="ENST00000398868.8">
    <property type="protein sequence ID" value="ENSP00000381844.3"/>
    <property type="RefSeq nucleotide sequence ID" value="NM_015459.5"/>
    <property type="RefSeq protein sequence ID" value="NP_056274.3"/>
</dbReference>
<dbReference type="UCSC" id="uc001nxk.2">
    <property type="organism name" value="human"/>
</dbReference>
<dbReference type="AGR" id="HGNC:24526"/>
<dbReference type="CTD" id="25923"/>
<dbReference type="DisGeNET" id="25923"/>
<dbReference type="GeneCards" id="ATL3"/>
<dbReference type="HGNC" id="HGNC:24526">
    <property type="gene designation" value="ATL3"/>
</dbReference>
<dbReference type="HPA" id="ENSG00000184743">
    <property type="expression patterns" value="Low tissue specificity"/>
</dbReference>
<dbReference type="MalaCards" id="ATL3"/>
<dbReference type="MIM" id="609369">
    <property type="type" value="gene"/>
</dbReference>
<dbReference type="MIM" id="615632">
    <property type="type" value="phenotype"/>
</dbReference>
<dbReference type="neXtProt" id="NX_Q6DD88"/>
<dbReference type="OpenTargets" id="ENSG00000184743"/>
<dbReference type="Orphanet" id="36386">
    <property type="disease" value="Hereditary sensory and autonomic neuropathy type 1"/>
</dbReference>
<dbReference type="PharmGKB" id="PA164716353"/>
<dbReference type="VEuPathDB" id="HostDB:ENSG00000184743"/>
<dbReference type="eggNOG" id="KOG2037">
    <property type="taxonomic scope" value="Eukaryota"/>
</dbReference>
<dbReference type="GeneTree" id="ENSGT00940000158566"/>
<dbReference type="InParanoid" id="Q6DD88"/>
<dbReference type="OMA" id="QYQKNME"/>
<dbReference type="OrthoDB" id="7788754at2759"/>
<dbReference type="PAN-GO" id="Q6DD88">
    <property type="GO annotations" value="4 GO annotations based on evolutionary models"/>
</dbReference>
<dbReference type="PhylomeDB" id="Q6DD88"/>
<dbReference type="TreeFam" id="TF105251"/>
<dbReference type="PathwayCommons" id="Q6DD88"/>
<dbReference type="SignaLink" id="Q6DD88"/>
<dbReference type="BioGRID-ORCS" id="25923">
    <property type="hits" value="24 hits in 1161 CRISPR screens"/>
</dbReference>
<dbReference type="ChiTaRS" id="ATL3">
    <property type="organism name" value="human"/>
</dbReference>
<dbReference type="GenomeRNAi" id="25923"/>
<dbReference type="Pharos" id="Q6DD88">
    <property type="development level" value="Tbio"/>
</dbReference>
<dbReference type="PRO" id="PR:Q6DD88"/>
<dbReference type="Proteomes" id="UP000005640">
    <property type="component" value="Chromosome 11"/>
</dbReference>
<dbReference type="RNAct" id="Q6DD88">
    <property type="molecule type" value="protein"/>
</dbReference>
<dbReference type="Bgee" id="ENSG00000184743">
    <property type="expression patterns" value="Expressed in upper arm skin and 199 other cell types or tissues"/>
</dbReference>
<dbReference type="ExpressionAtlas" id="Q6DD88">
    <property type="expression patterns" value="baseline and differential"/>
</dbReference>
<dbReference type="GO" id="GO:0005783">
    <property type="term" value="C:endoplasmic reticulum"/>
    <property type="evidence" value="ECO:0000314"/>
    <property type="project" value="HPA"/>
</dbReference>
<dbReference type="GO" id="GO:0005789">
    <property type="term" value="C:endoplasmic reticulum membrane"/>
    <property type="evidence" value="ECO:0000314"/>
    <property type="project" value="UniProtKB"/>
</dbReference>
<dbReference type="GO" id="GO:0071782">
    <property type="term" value="C:endoplasmic reticulum tubular network"/>
    <property type="evidence" value="ECO:0000314"/>
    <property type="project" value="UniProtKB"/>
</dbReference>
<dbReference type="GO" id="GO:0098826">
    <property type="term" value="C:endoplasmic reticulum tubular network membrane"/>
    <property type="evidence" value="ECO:0000314"/>
    <property type="project" value="UniProtKB"/>
</dbReference>
<dbReference type="GO" id="GO:0016020">
    <property type="term" value="C:membrane"/>
    <property type="evidence" value="ECO:0007005"/>
    <property type="project" value="UniProtKB"/>
</dbReference>
<dbReference type="GO" id="GO:0005525">
    <property type="term" value="F:GTP binding"/>
    <property type="evidence" value="ECO:0000318"/>
    <property type="project" value="GO_Central"/>
</dbReference>
<dbReference type="GO" id="GO:0003924">
    <property type="term" value="F:GTPase activity"/>
    <property type="evidence" value="ECO:0000318"/>
    <property type="project" value="GO_Central"/>
</dbReference>
<dbReference type="GO" id="GO:0140523">
    <property type="term" value="F:GTPase-dependent fusogenic activity"/>
    <property type="evidence" value="ECO:0000314"/>
    <property type="project" value="UniProtKB"/>
</dbReference>
<dbReference type="GO" id="GO:0042802">
    <property type="term" value="F:identical protein binding"/>
    <property type="evidence" value="ECO:0000314"/>
    <property type="project" value="UniProtKB"/>
</dbReference>
<dbReference type="GO" id="GO:0016320">
    <property type="term" value="P:endoplasmic reticulum membrane fusion"/>
    <property type="evidence" value="ECO:0000314"/>
    <property type="project" value="UniProtKB"/>
</dbReference>
<dbReference type="GO" id="GO:0007029">
    <property type="term" value="P:endoplasmic reticulum organization"/>
    <property type="evidence" value="ECO:0000318"/>
    <property type="project" value="GO_Central"/>
</dbReference>
<dbReference type="GO" id="GO:1990809">
    <property type="term" value="P:endoplasmic reticulum tubular network membrane organization"/>
    <property type="evidence" value="ECO:0000315"/>
    <property type="project" value="UniProtKB"/>
</dbReference>
<dbReference type="GO" id="GO:0051260">
    <property type="term" value="P:protein homooligomerization"/>
    <property type="evidence" value="ECO:0000318"/>
    <property type="project" value="GO_Central"/>
</dbReference>
<dbReference type="CDD" id="cd01851">
    <property type="entry name" value="GBP"/>
    <property type="match status" value="1"/>
</dbReference>
<dbReference type="FunFam" id="1.20.58.420:FF:000001">
    <property type="entry name" value="Atlastin-1 isoform 1"/>
    <property type="match status" value="1"/>
</dbReference>
<dbReference type="FunFam" id="3.40.50.300:FF:000314">
    <property type="entry name" value="Atlastin-2 isoform 2"/>
    <property type="match status" value="1"/>
</dbReference>
<dbReference type="Gene3D" id="1.20.58.420">
    <property type="entry name" value="AHSP"/>
    <property type="match status" value="1"/>
</dbReference>
<dbReference type="Gene3D" id="3.40.50.300">
    <property type="entry name" value="P-loop containing nucleotide triphosphate hydrolases"/>
    <property type="match status" value="1"/>
</dbReference>
<dbReference type="InterPro" id="IPR030386">
    <property type="entry name" value="G_GB1_RHD3_dom"/>
</dbReference>
<dbReference type="InterPro" id="IPR003191">
    <property type="entry name" value="Guanylate-bd/ATL_C"/>
</dbReference>
<dbReference type="InterPro" id="IPR036543">
    <property type="entry name" value="Guanylate-bd_C_sf"/>
</dbReference>
<dbReference type="InterPro" id="IPR015894">
    <property type="entry name" value="Guanylate-bd_N"/>
</dbReference>
<dbReference type="InterPro" id="IPR027417">
    <property type="entry name" value="P-loop_NTPase"/>
</dbReference>
<dbReference type="PANTHER" id="PTHR10751">
    <property type="entry name" value="GUANYLATE BINDING PROTEIN"/>
    <property type="match status" value="1"/>
</dbReference>
<dbReference type="Pfam" id="PF02263">
    <property type="entry name" value="GBP"/>
    <property type="match status" value="1"/>
</dbReference>
<dbReference type="Pfam" id="PF02841">
    <property type="entry name" value="GBP_C"/>
    <property type="match status" value="1"/>
</dbReference>
<dbReference type="SUPFAM" id="SSF48340">
    <property type="entry name" value="Interferon-induced guanylate-binding protein 1 (GBP1), C-terminal domain"/>
    <property type="match status" value="1"/>
</dbReference>
<dbReference type="SUPFAM" id="SSF52540">
    <property type="entry name" value="P-loop containing nucleoside triphosphate hydrolases"/>
    <property type="match status" value="1"/>
</dbReference>
<dbReference type="PROSITE" id="PS51715">
    <property type="entry name" value="G_GB1_RHD3"/>
    <property type="match status" value="1"/>
</dbReference>
<feature type="chain" id="PRO_0000287109" description="Atlastin-3">
    <location>
        <begin position="1"/>
        <end position="541"/>
    </location>
</feature>
<feature type="topological domain" description="Cytoplasmic" evidence="4">
    <location>
        <begin position="1"/>
        <end position="445"/>
    </location>
</feature>
<feature type="transmembrane region" description="Helical" evidence="2">
    <location>
        <begin position="446"/>
        <end position="466"/>
    </location>
</feature>
<feature type="topological domain" description="Lumenal" evidence="18">
    <location>
        <position position="467"/>
    </location>
</feature>
<feature type="transmembrane region" description="Helical" evidence="2">
    <location>
        <begin position="468"/>
        <end position="488"/>
    </location>
</feature>
<feature type="topological domain" description="Cytoplasmic" evidence="4">
    <location>
        <begin position="489"/>
        <end position="541"/>
    </location>
</feature>
<feature type="domain" description="GB1/RHD3-type G" evidence="3">
    <location>
        <begin position="57"/>
        <end position="305"/>
    </location>
</feature>
<feature type="region of interest" description="N-terminal hypervariable region (HVR)" evidence="12">
    <location>
        <begin position="1"/>
        <end position="25"/>
    </location>
</feature>
<feature type="region of interest" description="3HB (three-helix bundle) domain" evidence="1">
    <location>
        <begin position="343"/>
        <end position="434"/>
    </location>
</feature>
<feature type="binding site" evidence="10 12 21 22">
    <location>
        <position position="70"/>
    </location>
    <ligand>
        <name>GDP</name>
        <dbReference type="ChEBI" id="CHEBI:58189"/>
    </ligand>
</feature>
<feature type="binding site" evidence="10 12 21 22">
    <location>
        <position position="71"/>
    </location>
    <ligand>
        <name>GDP</name>
        <dbReference type="ChEBI" id="CHEBI:58189"/>
    </ligand>
</feature>
<feature type="binding site" evidence="10 12 21 22">
    <location>
        <position position="72"/>
    </location>
    <ligand>
        <name>GDP</name>
        <dbReference type="ChEBI" id="CHEBI:58189"/>
    </ligand>
</feature>
<feature type="binding site" evidence="10 12 21 22">
    <location>
        <position position="73"/>
    </location>
    <ligand>
        <name>GDP</name>
        <dbReference type="ChEBI" id="CHEBI:58189"/>
    </ligand>
</feature>
<feature type="binding site" evidence="10 12 21 22">
    <location>
        <position position="74"/>
    </location>
    <ligand>
        <name>GDP</name>
        <dbReference type="ChEBI" id="CHEBI:58189"/>
    </ligand>
</feature>
<feature type="binding site" evidence="10 12 21 22">
    <location>
        <position position="75"/>
    </location>
    <ligand>
        <name>GDP</name>
        <dbReference type="ChEBI" id="CHEBI:58189"/>
    </ligand>
</feature>
<feature type="binding site" evidence="10 12 21 22">
    <location>
        <position position="109"/>
    </location>
    <ligand>
        <name>GDP</name>
        <dbReference type="ChEBI" id="CHEBI:58189"/>
    </ligand>
</feature>
<feature type="binding site" evidence="12 22">
    <location>
        <position position="142"/>
    </location>
    <ligand>
        <name>Mg(2+)</name>
        <dbReference type="ChEBI" id="CHEBI:18420"/>
    </ligand>
</feature>
<feature type="binding site" evidence="10 12 21 22">
    <location>
        <position position="213"/>
    </location>
    <ligand>
        <name>GDP</name>
        <dbReference type="ChEBI" id="CHEBI:58189"/>
    </ligand>
</feature>
<feature type="binding site" evidence="10 12 21 22">
    <location>
        <position position="214"/>
    </location>
    <ligand>
        <name>GDP</name>
        <dbReference type="ChEBI" id="CHEBI:58189"/>
    </ligand>
</feature>
<feature type="binding site" evidence="10 12 21">
    <location>
        <position position="272"/>
    </location>
    <ligand>
        <name>GDP</name>
        <dbReference type="ChEBI" id="CHEBI:58189"/>
    </ligand>
</feature>
<feature type="binding site" evidence="10 12 21 22">
    <location>
        <position position="275"/>
    </location>
    <ligand>
        <name>GDP</name>
        <dbReference type="ChEBI" id="CHEBI:58189"/>
    </ligand>
</feature>
<feature type="modified residue" description="N6-acetyllysine" evidence="24">
    <location>
        <position position="391"/>
    </location>
</feature>
<feature type="modified residue" description="Phosphoserine" evidence="23 25">
    <location>
        <position position="535"/>
    </location>
</feature>
<feature type="sequence variant" id="VAR_070973" description="In HSN1F; loss of localization to endoplasmic reticulum tubular network membrane; loss of GTPase-dependent fusogenic activity; the mutant protein accumulates in condensed structures near the nucleus and localizes to unbranched tubules; has a dominant-negative disruptive effect on the regular structure of the endoplasmic reticulum; dbSNP:rs587777108." evidence="7 13">
    <original>Y</original>
    <variation>C</variation>
    <location>
        <position position="192"/>
    </location>
</feature>
<feature type="mutagenesis site" description="Loss of GTPase-dependent fusogenic activity." evidence="13">
    <original>R</original>
    <variation>E</variation>
    <location>
        <position position="70"/>
    </location>
</feature>
<feature type="mutagenesis site" description="Changed endoplasmic reticulum tubular network membrane organization." evidence="4 9">
    <original>K</original>
    <variation>A</variation>
    <location>
        <position position="73"/>
    </location>
</feature>
<feature type="mutagenesis site" description="Decreased GTPase activity." evidence="10">
    <original>R</original>
    <variation>A</variation>
    <location>
        <position position="109"/>
    </location>
</feature>
<feature type="mutagenesis site" description="Changed endoplasmic reticulum tubular network membrane organization." evidence="4 9">
    <original>R</original>
    <variation>Q</variation>
    <location>
        <position position="213"/>
    </location>
</feature>
<feature type="mutagenesis site" description="Loss of GTPase-dependent fusogenic activity." evidence="13">
    <original>P</original>
    <variation>R</variation>
    <location>
        <position position="338"/>
    </location>
</feature>
<feature type="mutagenesis site" description="Loss of GTPase-dependent fusogenic activity." evidence="13">
    <original>I</original>
    <variation>D</variation>
    <location>
        <position position="503"/>
    </location>
</feature>
<feature type="sequence conflict" description="In Ref. 1; BAB14552." evidence="17" ref="1">
    <original>I</original>
    <variation>T</variation>
    <location>
        <position position="49"/>
    </location>
</feature>
<feature type="sequence conflict" description="In Ref. 2; CAB56010." evidence="17" ref="2">
    <original>T</original>
    <variation>A</variation>
    <location>
        <position position="158"/>
    </location>
</feature>
<feature type="sequence conflict" description="In Ref. 1; BAC05111." evidence="17" ref="1">
    <original>N</original>
    <variation>S</variation>
    <location>
        <position position="173"/>
    </location>
</feature>
<feature type="sequence conflict" description="In Ref. 2; CAB56010." evidence="17" ref="2">
    <original>Q</original>
    <variation>R</variation>
    <location>
        <position position="202"/>
    </location>
</feature>
<feature type="sequence conflict" description="In Ref. 2; CAB56010." evidence="17" ref="2">
    <original>W</original>
    <variation>R</variation>
    <location>
        <position position="215"/>
    </location>
</feature>
<feature type="sequence conflict" description="In Ref. 2; CAB56010." evidence="17" ref="2">
    <original>N</original>
    <variation>Y</variation>
    <location>
        <position position="351"/>
    </location>
</feature>
<feature type="helix" evidence="27">
    <location>
        <begin position="4"/>
        <end position="21"/>
    </location>
</feature>
<feature type="strand" evidence="26">
    <location>
        <begin position="26"/>
        <end position="31"/>
    </location>
</feature>
<feature type="strand" evidence="27">
    <location>
        <begin position="39"/>
        <end position="41"/>
    </location>
</feature>
<feature type="helix" evidence="26">
    <location>
        <begin position="43"/>
        <end position="50"/>
    </location>
</feature>
<feature type="turn" evidence="26">
    <location>
        <begin position="53"/>
        <end position="57"/>
    </location>
</feature>
<feature type="strand" evidence="26">
    <location>
        <begin position="58"/>
        <end position="68"/>
    </location>
</feature>
<feature type="helix" evidence="26">
    <location>
        <begin position="73"/>
        <end position="88"/>
    </location>
</feature>
<feature type="strand" evidence="26">
    <location>
        <begin position="111"/>
        <end position="113"/>
    </location>
</feature>
<feature type="strand" evidence="26">
    <location>
        <begin position="118"/>
        <end position="123"/>
    </location>
</feature>
<feature type="strand" evidence="26">
    <location>
        <begin position="126"/>
        <end position="129"/>
    </location>
</feature>
<feature type="strand" evidence="26">
    <location>
        <begin position="135"/>
        <end position="145"/>
    </location>
</feature>
<feature type="strand" evidence="27">
    <location>
        <begin position="148"/>
        <end position="153"/>
    </location>
</feature>
<feature type="helix" evidence="26">
    <location>
        <begin position="157"/>
        <end position="166"/>
    </location>
</feature>
<feature type="strand" evidence="26">
    <location>
        <begin position="168"/>
        <end position="177"/>
    </location>
</feature>
<feature type="helix" evidence="26">
    <location>
        <begin position="180"/>
        <end position="184"/>
    </location>
</feature>
<feature type="helix" evidence="26">
    <location>
        <begin position="187"/>
        <end position="200"/>
    </location>
</feature>
<feature type="strand" evidence="26">
    <location>
        <begin position="204"/>
        <end position="213"/>
    </location>
</feature>
<feature type="turn" evidence="26">
    <location>
        <begin position="218"/>
        <end position="220"/>
    </location>
</feature>
<feature type="helix" evidence="26">
    <location>
        <begin position="225"/>
        <end position="235"/>
    </location>
</feature>
<feature type="helix" evidence="26">
    <location>
        <begin position="244"/>
        <end position="250"/>
    </location>
</feature>
<feature type="helix" evidence="26">
    <location>
        <begin position="253"/>
        <end position="256"/>
    </location>
</feature>
<feature type="strand" evidence="26">
    <location>
        <begin position="257"/>
        <end position="264"/>
    </location>
</feature>
<feature type="helix" evidence="26">
    <location>
        <begin position="270"/>
        <end position="273"/>
    </location>
</feature>
<feature type="helix" evidence="26">
    <location>
        <begin position="282"/>
        <end position="284"/>
    </location>
</feature>
<feature type="helix" evidence="26">
    <location>
        <begin position="287"/>
        <end position="301"/>
    </location>
</feature>
<feature type="turn" evidence="26">
    <location>
        <begin position="303"/>
        <end position="305"/>
    </location>
</feature>
<feature type="helix" evidence="26">
    <location>
        <begin position="318"/>
        <end position="331"/>
    </location>
</feature>
<feature type="strand" evidence="26">
    <location>
        <begin position="334"/>
        <end position="336"/>
    </location>
</feature>
<feature type="helix" evidence="26">
    <location>
        <begin position="340"/>
        <end position="371"/>
    </location>
</feature>
<feature type="helix" evidence="26">
    <location>
        <begin position="380"/>
        <end position="400"/>
    </location>
</feature>
<feature type="helix" evidence="26">
    <location>
        <begin position="407"/>
        <end position="434"/>
    </location>
</feature>
<sequence>MLSPQRVAAAASRGADDAMESSKPGPVQVVLVQKDQHSFELDEKALASILLQDHIRDLDVVVVSVAGAFRKGKSFILDFMLRYLYSQKESGHSNWLGDPEEPLTGFSWRGGSDPETTGIQIWSEVFTVEKPGGKKVAVVLMDTQGAFDSQSTVKDCATIFALSTMTSSVQIYNLSQNIQEDDLQQLQLFTEYGRLAMDEIFQKPFQTLMFLVRDWSFPYEYSYGLQGGMAFLDKRLQVKEHQHEEIQNVRNHIHSCFSDVTCFLLPHPGLQVATSPDFDGKLKDIAGEFKEQLQALIPYVLNPSKLMEKEINGSKVTCRGLLEYFKAYIKIYQGEDLPHPKSMLQATAEANNLAAAASAKDIYYNNMEEVCGGEKPYLSPDILEEKHCEFKQLALDHFKKTKKMGGKDFSFRYQQELEEEIKELYENFCKHNGSKNVFSTFRTPAVLFTGIVALYIASGLTGFIGLEVVAQLFNCMVGLLLIALLTWGYIRYSGQYRELGGAIDFGAAYVLEQASSHIGNSTQATVRDAVVGRPSMDKKAQ</sequence>
<keyword id="KW-0002">3D-structure</keyword>
<keyword id="KW-0007">Acetylation</keyword>
<keyword id="KW-0225">Disease variant</keyword>
<keyword id="KW-0256">Endoplasmic reticulum</keyword>
<keyword id="KW-0342">GTP-binding</keyword>
<keyword id="KW-0378">Hydrolase</keyword>
<keyword id="KW-0460">Magnesium</keyword>
<keyword id="KW-0472">Membrane</keyword>
<keyword id="KW-0622">Neuropathy</keyword>
<keyword id="KW-0547">Nucleotide-binding</keyword>
<keyword id="KW-0597">Phosphoprotein</keyword>
<keyword id="KW-1267">Proteomics identification</keyword>
<keyword id="KW-1185">Reference proteome</keyword>
<keyword id="KW-0812">Transmembrane</keyword>
<keyword id="KW-1133">Transmembrane helix</keyword>
<proteinExistence type="evidence at protein level"/>